<proteinExistence type="inferred from homology"/>
<protein>
    <recommendedName>
        <fullName evidence="1">Dual-action ribosomal maturation protein DarP</fullName>
    </recommendedName>
    <alternativeName>
        <fullName evidence="1">Large ribosomal subunit assembly factor DarP</fullName>
    </alternativeName>
</protein>
<name>DARP_HISS1</name>
<organism>
    <name type="scientific">Histophilus somni (strain 129Pt)</name>
    <name type="common">Haemophilus somnus</name>
    <dbReference type="NCBI Taxonomy" id="205914"/>
    <lineage>
        <taxon>Bacteria</taxon>
        <taxon>Pseudomonadati</taxon>
        <taxon>Pseudomonadota</taxon>
        <taxon>Gammaproteobacteria</taxon>
        <taxon>Pasteurellales</taxon>
        <taxon>Pasteurellaceae</taxon>
        <taxon>Histophilus</taxon>
    </lineage>
</organism>
<evidence type="ECO:0000255" key="1">
    <source>
        <dbReference type="HAMAP-Rule" id="MF_00765"/>
    </source>
</evidence>
<comment type="function">
    <text evidence="1">Member of a network of 50S ribosomal subunit biogenesis factors which assembles along the 30S-50S interface, preventing incorrect 23S rRNA structures from forming. Promotes peptidyl transferase center (PTC) maturation.</text>
</comment>
<comment type="subcellular location">
    <subcellularLocation>
        <location evidence="1">Cytoplasm</location>
    </subcellularLocation>
    <text evidence="1">Associates with late stage pre-50S ribosomal subunits.</text>
</comment>
<comment type="similarity">
    <text evidence="1">Belongs to the DarP family.</text>
</comment>
<sequence length="177" mass="20993">MAKRKEEVFNWEDEEQEEIIWVSKSEIKRDAEALKKLGEKLVNLTKTNLDKIPLDTGLRDAVELAQRLQKEALRRQIQYIGKLLRAIDPEPIQEALNKIENKHQQQQAKLHKLELLRDELVQKGNSAFTELLIQYPHADRQHLHNLIRSAQKEREQNKPPKSYREIFQYLKDLILED</sequence>
<reference key="1">
    <citation type="journal article" date="2007" name="J. Bacteriol.">
        <title>Complete genome sequence of Haemophilus somnus (Histophilus somni) strain 129Pt and comparison to Haemophilus ducreyi 35000HP and Haemophilus influenzae Rd.</title>
        <authorList>
            <person name="Challacombe J.F."/>
            <person name="Duncan A.J."/>
            <person name="Brettin T.S."/>
            <person name="Bruce D."/>
            <person name="Chertkov O."/>
            <person name="Detter J.C."/>
            <person name="Han C.S."/>
            <person name="Misra M."/>
            <person name="Richardson P."/>
            <person name="Tapia R."/>
            <person name="Thayer N."/>
            <person name="Xie G."/>
            <person name="Inzana T.J."/>
        </authorList>
    </citation>
    <scope>NUCLEOTIDE SEQUENCE [LARGE SCALE GENOMIC DNA]</scope>
    <source>
        <strain>129Pt</strain>
    </source>
</reference>
<gene>
    <name evidence="1" type="primary">darP</name>
    <name type="ordered locus">HS_1326</name>
</gene>
<feature type="chain" id="PRO_1000046800" description="Dual-action ribosomal maturation protein DarP">
    <location>
        <begin position="1"/>
        <end position="177"/>
    </location>
</feature>
<accession>Q0I4Q7</accession>
<keyword id="KW-0963">Cytoplasm</keyword>
<keyword id="KW-0690">Ribosome biogenesis</keyword>
<keyword id="KW-0694">RNA-binding</keyword>
<keyword id="KW-0699">rRNA-binding</keyword>
<dbReference type="EMBL" id="CP000436">
    <property type="protein sequence ID" value="ABI25601.1"/>
    <property type="molecule type" value="Genomic_DNA"/>
</dbReference>
<dbReference type="SMR" id="Q0I4Q7"/>
<dbReference type="KEGG" id="hso:HS_1326"/>
<dbReference type="eggNOG" id="COG3028">
    <property type="taxonomic scope" value="Bacteria"/>
</dbReference>
<dbReference type="HOGENOM" id="CLU_106757_2_0_6"/>
<dbReference type="GO" id="GO:0005829">
    <property type="term" value="C:cytosol"/>
    <property type="evidence" value="ECO:0007669"/>
    <property type="project" value="TreeGrafter"/>
</dbReference>
<dbReference type="GO" id="GO:0043022">
    <property type="term" value="F:ribosome binding"/>
    <property type="evidence" value="ECO:0007669"/>
    <property type="project" value="UniProtKB-UniRule"/>
</dbReference>
<dbReference type="GO" id="GO:0019843">
    <property type="term" value="F:rRNA binding"/>
    <property type="evidence" value="ECO:0007669"/>
    <property type="project" value="UniProtKB-UniRule"/>
</dbReference>
<dbReference type="GO" id="GO:1902626">
    <property type="term" value="P:assembly of large subunit precursor of preribosome"/>
    <property type="evidence" value="ECO:0007669"/>
    <property type="project" value="UniProtKB-UniRule"/>
</dbReference>
<dbReference type="CDD" id="cd16331">
    <property type="entry name" value="YjgA-like"/>
    <property type="match status" value="1"/>
</dbReference>
<dbReference type="FunFam" id="1.10.60.30:FF:000002">
    <property type="entry name" value="UPF0307 protein YjgA"/>
    <property type="match status" value="1"/>
</dbReference>
<dbReference type="Gene3D" id="1.10.60.30">
    <property type="entry name" value="PSPTO4464-like domains"/>
    <property type="match status" value="2"/>
</dbReference>
<dbReference type="HAMAP" id="MF_00765">
    <property type="entry name" value="DarP"/>
    <property type="match status" value="1"/>
</dbReference>
<dbReference type="InterPro" id="IPR006839">
    <property type="entry name" value="DarP"/>
</dbReference>
<dbReference type="InterPro" id="IPR023153">
    <property type="entry name" value="DarP_sf"/>
</dbReference>
<dbReference type="NCBIfam" id="NF003593">
    <property type="entry name" value="PRK05255.1-1"/>
    <property type="match status" value="1"/>
</dbReference>
<dbReference type="PANTHER" id="PTHR38101">
    <property type="entry name" value="UPF0307 PROTEIN YJGA"/>
    <property type="match status" value="1"/>
</dbReference>
<dbReference type="PANTHER" id="PTHR38101:SF1">
    <property type="entry name" value="UPF0307 PROTEIN YJGA"/>
    <property type="match status" value="1"/>
</dbReference>
<dbReference type="Pfam" id="PF04751">
    <property type="entry name" value="DarP"/>
    <property type="match status" value="1"/>
</dbReference>
<dbReference type="PIRSF" id="PIRSF016183">
    <property type="entry name" value="UCP016183"/>
    <property type="match status" value="1"/>
</dbReference>
<dbReference type="SUPFAM" id="SSF158710">
    <property type="entry name" value="PSPTO4464-like"/>
    <property type="match status" value="1"/>
</dbReference>